<sequence>MPIQVLPPQLANQIAAGEVVERPASVVKELVENSLDAGATRVDIDIERGGAKLIRIRDNGCGIKKEELALALARHATSKIASLDDLEAIISLGFRGEALASISSVSRLTLTSRTAEQAEAWQAYAEGRDMDVTVKPAAHPVGTTLEVLDLFYNTPARRKFMRTEKTEFNHIDEIIRRIALARFDVTLNLSHNGKLVRQYRAVAKDGQKERRLGAICGTPFLEQALAIEWQHGDLTLRGWVADPNHTTTALTEIQYCYVNGRMMRDRLINHAIRQACEDKLGADQQPAFVLYLEIDPHQVDVNVHPAKHEVRFHQSRLVHDFIYQGVLSVLQQQTETTLPLEEIAPAPRHVPENRIAAGRNHFAVPAEPTAAREPATPRYSGGASGGNGGRQTAGGWPHAQPGYQKQQGEVYRALLQTPTTSPVPEPVAPALDGHSQSFGRVLTIVGGDCALLEHAGTIQLLSLPVAERWLRQAQLTPGQSPVCAQPLLIPLRLKVSADEKAALQQAQSLLGELGIEFQSDAQHVTIRAVPLPLRQQNLQILIPELIGYLAQQTTFATVNIAQWIARNVQSEHPQWSMAQAISLLADVERLCPQLVKAPPGGLLQPVDLHSAMNALKHE</sequence>
<reference key="1">
    <citation type="journal article" date="2009" name="PLoS ONE">
        <title>Salmonella paratyphi C: genetic divergence from Salmonella choleraesuis and pathogenic convergence with Salmonella typhi.</title>
        <authorList>
            <person name="Liu W.-Q."/>
            <person name="Feng Y."/>
            <person name="Wang Y."/>
            <person name="Zou Q.-H."/>
            <person name="Chen F."/>
            <person name="Guo J.-T."/>
            <person name="Peng Y.-H."/>
            <person name="Jin Y."/>
            <person name="Li Y.-G."/>
            <person name="Hu S.-N."/>
            <person name="Johnston R.N."/>
            <person name="Liu G.-R."/>
            <person name="Liu S.-L."/>
        </authorList>
    </citation>
    <scope>NUCLEOTIDE SEQUENCE [LARGE SCALE GENOMIC DNA]</scope>
    <source>
        <strain>RKS4594</strain>
    </source>
</reference>
<accession>C0Q6C7</accession>
<comment type="function">
    <text evidence="1">This protein is involved in the repair of mismatches in DNA. It is required for dam-dependent methyl-directed DNA mismatch repair. May act as a 'molecular matchmaker', a protein that promotes the formation of a stable complex between two or more DNA-binding proteins in an ATP-dependent manner without itself being part of a final effector complex.</text>
</comment>
<comment type="similarity">
    <text evidence="1">Belongs to the DNA mismatch repair MutL/HexB family.</text>
</comment>
<proteinExistence type="inferred from homology"/>
<protein>
    <recommendedName>
        <fullName evidence="1">DNA mismatch repair protein MutL</fullName>
    </recommendedName>
</protein>
<organism>
    <name type="scientific">Salmonella paratyphi C (strain RKS4594)</name>
    <dbReference type="NCBI Taxonomy" id="476213"/>
    <lineage>
        <taxon>Bacteria</taxon>
        <taxon>Pseudomonadati</taxon>
        <taxon>Pseudomonadota</taxon>
        <taxon>Gammaproteobacteria</taxon>
        <taxon>Enterobacterales</taxon>
        <taxon>Enterobacteriaceae</taxon>
        <taxon>Salmonella</taxon>
    </lineage>
</organism>
<name>MUTL_SALPC</name>
<evidence type="ECO:0000255" key="1">
    <source>
        <dbReference type="HAMAP-Rule" id="MF_00149"/>
    </source>
</evidence>
<evidence type="ECO:0000256" key="2">
    <source>
        <dbReference type="SAM" id="MobiDB-lite"/>
    </source>
</evidence>
<gene>
    <name evidence="1" type="primary">mutL</name>
    <name type="ordered locus">SPC_4506</name>
</gene>
<dbReference type="EMBL" id="CP000857">
    <property type="protein sequence ID" value="ACN48557.1"/>
    <property type="molecule type" value="Genomic_DNA"/>
</dbReference>
<dbReference type="RefSeq" id="WP_001122559.1">
    <property type="nucleotide sequence ID" value="NC_012125.1"/>
</dbReference>
<dbReference type="SMR" id="C0Q6C7"/>
<dbReference type="KEGG" id="sei:SPC_4506"/>
<dbReference type="HOGENOM" id="CLU_004131_5_1_6"/>
<dbReference type="Proteomes" id="UP000001599">
    <property type="component" value="Chromosome"/>
</dbReference>
<dbReference type="GO" id="GO:0032300">
    <property type="term" value="C:mismatch repair complex"/>
    <property type="evidence" value="ECO:0007669"/>
    <property type="project" value="InterPro"/>
</dbReference>
<dbReference type="GO" id="GO:0005524">
    <property type="term" value="F:ATP binding"/>
    <property type="evidence" value="ECO:0007669"/>
    <property type="project" value="InterPro"/>
</dbReference>
<dbReference type="GO" id="GO:0016887">
    <property type="term" value="F:ATP hydrolysis activity"/>
    <property type="evidence" value="ECO:0007669"/>
    <property type="project" value="InterPro"/>
</dbReference>
<dbReference type="GO" id="GO:0140664">
    <property type="term" value="F:ATP-dependent DNA damage sensor activity"/>
    <property type="evidence" value="ECO:0007669"/>
    <property type="project" value="InterPro"/>
</dbReference>
<dbReference type="GO" id="GO:0030983">
    <property type="term" value="F:mismatched DNA binding"/>
    <property type="evidence" value="ECO:0007669"/>
    <property type="project" value="InterPro"/>
</dbReference>
<dbReference type="GO" id="GO:0006298">
    <property type="term" value="P:mismatch repair"/>
    <property type="evidence" value="ECO:0007669"/>
    <property type="project" value="UniProtKB-UniRule"/>
</dbReference>
<dbReference type="CDD" id="cd16926">
    <property type="entry name" value="HATPase_MutL-MLH-PMS-like"/>
    <property type="match status" value="1"/>
</dbReference>
<dbReference type="CDD" id="cd03482">
    <property type="entry name" value="MutL_Trans_MutL"/>
    <property type="match status" value="1"/>
</dbReference>
<dbReference type="FunFam" id="3.30.230.10:FF:000013">
    <property type="entry name" value="DNA mismatch repair endonuclease MutL"/>
    <property type="match status" value="1"/>
</dbReference>
<dbReference type="FunFam" id="3.30.565.10:FF:000003">
    <property type="entry name" value="DNA mismatch repair endonuclease MutL"/>
    <property type="match status" value="1"/>
</dbReference>
<dbReference type="FunFam" id="3.30.1370.100:FF:000002">
    <property type="entry name" value="DNA mismatch repair protein MutL"/>
    <property type="match status" value="1"/>
</dbReference>
<dbReference type="Gene3D" id="3.30.230.10">
    <property type="match status" value="1"/>
</dbReference>
<dbReference type="Gene3D" id="3.30.565.10">
    <property type="entry name" value="Histidine kinase-like ATPase, C-terminal domain"/>
    <property type="match status" value="1"/>
</dbReference>
<dbReference type="Gene3D" id="3.30.1540.20">
    <property type="entry name" value="MutL, C-terminal domain, dimerisation subdomain"/>
    <property type="match status" value="1"/>
</dbReference>
<dbReference type="Gene3D" id="3.30.1370.100">
    <property type="entry name" value="MutL, C-terminal domain, regulatory subdomain"/>
    <property type="match status" value="1"/>
</dbReference>
<dbReference type="HAMAP" id="MF_00149">
    <property type="entry name" value="DNA_mis_repair"/>
    <property type="match status" value="1"/>
</dbReference>
<dbReference type="InterPro" id="IPR014762">
    <property type="entry name" value="DNA_mismatch_repair_CS"/>
</dbReference>
<dbReference type="InterPro" id="IPR020667">
    <property type="entry name" value="DNA_mismatch_repair_MutL"/>
</dbReference>
<dbReference type="InterPro" id="IPR013507">
    <property type="entry name" value="DNA_mismatch_S5_2-like"/>
</dbReference>
<dbReference type="InterPro" id="IPR036890">
    <property type="entry name" value="HATPase_C_sf"/>
</dbReference>
<dbReference type="InterPro" id="IPR002099">
    <property type="entry name" value="MutL/Mlh/PMS"/>
</dbReference>
<dbReference type="InterPro" id="IPR038973">
    <property type="entry name" value="MutL/Mlh/Pms-like"/>
</dbReference>
<dbReference type="InterPro" id="IPR014790">
    <property type="entry name" value="MutL_C"/>
</dbReference>
<dbReference type="InterPro" id="IPR042120">
    <property type="entry name" value="MutL_C_dimsub"/>
</dbReference>
<dbReference type="InterPro" id="IPR042121">
    <property type="entry name" value="MutL_C_regsub"/>
</dbReference>
<dbReference type="InterPro" id="IPR037198">
    <property type="entry name" value="MutL_C_sf"/>
</dbReference>
<dbReference type="InterPro" id="IPR020568">
    <property type="entry name" value="Ribosomal_Su5_D2-typ_SF"/>
</dbReference>
<dbReference type="InterPro" id="IPR014721">
    <property type="entry name" value="Ribsml_uS5_D2-typ_fold_subgr"/>
</dbReference>
<dbReference type="NCBIfam" id="TIGR00585">
    <property type="entry name" value="mutl"/>
    <property type="match status" value="1"/>
</dbReference>
<dbReference type="NCBIfam" id="NF000948">
    <property type="entry name" value="PRK00095.1-1"/>
    <property type="match status" value="1"/>
</dbReference>
<dbReference type="PANTHER" id="PTHR10073">
    <property type="entry name" value="DNA MISMATCH REPAIR PROTEIN MLH, PMS, MUTL"/>
    <property type="match status" value="1"/>
</dbReference>
<dbReference type="PANTHER" id="PTHR10073:SF12">
    <property type="entry name" value="DNA MISMATCH REPAIR PROTEIN MLH1"/>
    <property type="match status" value="1"/>
</dbReference>
<dbReference type="Pfam" id="PF01119">
    <property type="entry name" value="DNA_mis_repair"/>
    <property type="match status" value="1"/>
</dbReference>
<dbReference type="Pfam" id="PF13589">
    <property type="entry name" value="HATPase_c_3"/>
    <property type="match status" value="1"/>
</dbReference>
<dbReference type="Pfam" id="PF08676">
    <property type="entry name" value="MutL_C"/>
    <property type="match status" value="1"/>
</dbReference>
<dbReference type="SMART" id="SM01340">
    <property type="entry name" value="DNA_mis_repair"/>
    <property type="match status" value="1"/>
</dbReference>
<dbReference type="SMART" id="SM00853">
    <property type="entry name" value="MutL_C"/>
    <property type="match status" value="1"/>
</dbReference>
<dbReference type="SUPFAM" id="SSF55874">
    <property type="entry name" value="ATPase domain of HSP90 chaperone/DNA topoisomerase II/histidine kinase"/>
    <property type="match status" value="1"/>
</dbReference>
<dbReference type="SUPFAM" id="SSF118116">
    <property type="entry name" value="DNA mismatch repair protein MutL"/>
    <property type="match status" value="1"/>
</dbReference>
<dbReference type="SUPFAM" id="SSF54211">
    <property type="entry name" value="Ribosomal protein S5 domain 2-like"/>
    <property type="match status" value="1"/>
</dbReference>
<dbReference type="PROSITE" id="PS00058">
    <property type="entry name" value="DNA_MISMATCH_REPAIR_1"/>
    <property type="match status" value="1"/>
</dbReference>
<keyword id="KW-0227">DNA damage</keyword>
<keyword id="KW-0234">DNA repair</keyword>
<feature type="chain" id="PRO_1000123214" description="DNA mismatch repair protein MutL">
    <location>
        <begin position="1"/>
        <end position="618"/>
    </location>
</feature>
<feature type="region of interest" description="Disordered" evidence="2">
    <location>
        <begin position="367"/>
        <end position="402"/>
    </location>
</feature>
<feature type="compositionally biased region" description="Low complexity" evidence="2">
    <location>
        <begin position="367"/>
        <end position="378"/>
    </location>
</feature>
<feature type="compositionally biased region" description="Gly residues" evidence="2">
    <location>
        <begin position="382"/>
        <end position="392"/>
    </location>
</feature>